<evidence type="ECO:0000250" key="1">
    <source>
        <dbReference type="UniProtKB" id="O62137"/>
    </source>
</evidence>
<evidence type="ECO:0000250" key="2">
    <source>
        <dbReference type="UniProtKB" id="O62140"/>
    </source>
</evidence>
<evidence type="ECO:0000255" key="3"/>
<evidence type="ECO:0000255" key="4">
    <source>
        <dbReference type="PIRNR" id="PIRNR000168"/>
    </source>
</evidence>
<evidence type="ECO:0000255" key="5">
    <source>
        <dbReference type="PIRSR" id="PIRSR000168-1"/>
    </source>
</evidence>
<evidence type="ECO:0000255" key="6">
    <source>
        <dbReference type="PIRSR" id="PIRSR000168-2"/>
    </source>
</evidence>
<evidence type="ECO:0000269" key="7">
    <source>
    </source>
</evidence>
<evidence type="ECO:0000269" key="8">
    <source>
    </source>
</evidence>
<evidence type="ECO:0000305" key="9"/>
<evidence type="ECO:0000305" key="10">
    <source>
    </source>
</evidence>
<evidence type="ECO:0000305" key="11">
    <source>
    </source>
</evidence>
<evidence type="ECO:0000312" key="12">
    <source>
        <dbReference type="Proteomes" id="UP000001940"/>
    </source>
</evidence>
<evidence type="ECO:0000312" key="13">
    <source>
        <dbReference type="WormBase" id="F08A8.4"/>
    </source>
</evidence>
<comment type="function">
    <text evidence="7 8">Involved in the first step of peroxisomal beta-oxidation by catalyzing the desaturation of fatty acid-derived side chains of ascaroside pheromones, which regulates development and behavior (PubMed:29537254, PubMed:29863473). Specifically, shortens ascarosides with a 9-carbon side chain (asc-C9) and, in association with acox-1.1, may contribute to the shortening of ascarosides with a 11-carbon side chain (asc-C11) (PubMed:29537254, PubMed:29863473). May contribute to the production of indol-3-carbonyl(IC)-ascarosides in association with acox-1.1 and acox-3 (PubMed:29863473).</text>
</comment>
<comment type="catalytic activity">
    <reaction evidence="10 11">
        <text>asc-C9-CoA + O2 = asc-DeltaC9-CoA + H2O2</text>
        <dbReference type="Rhea" id="RHEA:66224"/>
        <dbReference type="ChEBI" id="CHEBI:15379"/>
        <dbReference type="ChEBI" id="CHEBI:16240"/>
        <dbReference type="ChEBI" id="CHEBI:139617"/>
        <dbReference type="ChEBI" id="CHEBI:139706"/>
    </reaction>
</comment>
<comment type="cofactor">
    <cofactor evidence="2">
        <name>FAD</name>
        <dbReference type="ChEBI" id="CHEBI:57692"/>
    </cofactor>
</comment>
<comment type="activity regulation">
    <text evidence="2">Activated by ATP (By similarity). ATP binding leads to a conformational change that promotes FAD cofactor binding and enzyme activity (By similarity). ATP binding likely occurs during acox-1.4 folding and/or dimer formation (By similarity).</text>
</comment>
<comment type="pathway">
    <text evidence="7">Lipid metabolism; peroxisomal fatty acid beta-oxidation.</text>
</comment>
<comment type="subunit">
    <text evidence="2">Homodimer.</text>
</comment>
<comment type="subcellular location">
    <subcellularLocation>
        <location evidence="2">Peroxisome</location>
    </subcellularLocation>
</comment>
<comment type="similarity">
    <text evidence="4">Belongs to the acyl-CoA oxidase family.</text>
</comment>
<gene>
    <name evidence="13" type="primary">acox-1.4</name>
    <name evidence="13" type="synonym">acox-4</name>
    <name evidence="13" type="ORF">F08A8.4</name>
</gene>
<keyword id="KW-0067">ATP-binding</keyword>
<keyword id="KW-0274">FAD</keyword>
<keyword id="KW-0276">Fatty acid metabolism</keyword>
<keyword id="KW-0285">Flavoprotein</keyword>
<keyword id="KW-0443">Lipid metabolism</keyword>
<keyword id="KW-0547">Nucleotide-binding</keyword>
<keyword id="KW-0560">Oxidoreductase</keyword>
<keyword id="KW-0576">Peroxisome</keyword>
<keyword id="KW-1185">Reference proteome</keyword>
<sequence length="662" mass="74771">MHLNTSICEVDNPDLTEEREKGTFDTDKMAAVIYGSEKLARRRREISEAVSKIPELADTQPFPFMDRLEKITEGSRKLEVLNNNIRDIIDYDDNGERLHIYQEVTGMEGHPLALHEVMFIPALVSQASKEQQEKWLGRARRREIIGCYAQTEMGHGTNLRKLETTATYFPDTQEFVLNTPTTTALKWWPGALGKSSNYAVVVVDMIIKGKSYGPHPFMVQLRDEKTHIPLKGIVVGDIGPKMSFNGGDNGFLGFDKFRVPRTNLLMRHVRVEADGTYVKPPHAKVNHSAMVHVRSHMATGQGALLAQALIIAVRYSAVRRQGFLENKTQEVKVLDYQTQQHRLFPSLARAYAFIFTGFETIHLYSQLLKDVDMGNTSGMADLHALTSGLKSVVTHQTGEGIEQARMACGGHGYSMASYISEIYGIAIGGCTYEGENMVMLLQLARYLVKSVELIKSGEAKKLGPMVSYLAAKGGHPDLSSLNGYVTAFEHMARRQAWKATEKFLKLMESGESREIAWNKSTVELTRASRLHTRLFIIEAFMRRVSRIEDIPVKEVLTDLLHLHVNYELLDVATYALEFMSSTQLDYIRDQLYLYLEKIRPSAVSLVDSFQISDMQLRSVLGRRDGNVYENLFKWAKSSPLNKSDVLPSVDKYLMPMMEKAKL</sequence>
<accession>O62139</accession>
<name>ACX14_CAEEL</name>
<protein>
    <recommendedName>
        <fullName evidence="9">Acyl-coenzyme A oxidase acox-1.4</fullName>
        <ecNumber evidence="10 11">1.3.3.-</ecNumber>
    </recommendedName>
</protein>
<reference evidence="12" key="1">
    <citation type="journal article" date="1998" name="Science">
        <title>Genome sequence of the nematode C. elegans: a platform for investigating biology.</title>
        <authorList>
            <consortium name="The C. elegans sequencing consortium"/>
        </authorList>
    </citation>
    <scope>NUCLEOTIDE SEQUENCE [LARGE SCALE GENOMIC DNA]</scope>
    <source>
        <strain evidence="12">Bristol N2</strain>
    </source>
</reference>
<reference evidence="9" key="2">
    <citation type="journal article" date="2018" name="ACS Chem. Biol.">
        <title>Acyl-CoA Oxidases Fine-Tune the Production of Ascaroside Pheromones with Specific Side Chain Lengths.</title>
        <authorList>
            <person name="Zhang X."/>
            <person name="Wang Y."/>
            <person name="Perez D.H."/>
            <person name="Jones Lipinski R.A."/>
            <person name="Butcher R.A."/>
        </authorList>
    </citation>
    <scope>FUNCTION</scope>
    <scope>CATALYTIC ACTIVITY</scope>
    <scope>PATHWAY</scope>
    <scope>MUTAGENESIS OF GLU-433 AND 517-TRP--LEU-662</scope>
</reference>
<reference evidence="9" key="3">
    <citation type="journal article" date="2018" name="Elife">
        <title>Biosynthetic tailoring of existing ascaroside pheromones alters their biological function in C. elegans.</title>
        <authorList>
            <person name="Zhou Y."/>
            <person name="Wang Y."/>
            <person name="Zhang X."/>
            <person name="Bhar S."/>
            <person name="Jones Lipinski R.A."/>
            <person name="Han J."/>
            <person name="Feng L."/>
            <person name="Butcher R.A."/>
        </authorList>
    </citation>
    <scope>FUNCTION</scope>
    <scope>CATALYTIC ACTIVITY</scope>
    <scope>MUTAGENESIS OF GLU-433 AND 517-TRP--LEU-662</scope>
</reference>
<organism evidence="12">
    <name type="scientific">Caenorhabditis elegans</name>
    <dbReference type="NCBI Taxonomy" id="6239"/>
    <lineage>
        <taxon>Eukaryota</taxon>
        <taxon>Metazoa</taxon>
        <taxon>Ecdysozoa</taxon>
        <taxon>Nematoda</taxon>
        <taxon>Chromadorea</taxon>
        <taxon>Rhabditida</taxon>
        <taxon>Rhabditina</taxon>
        <taxon>Rhabditomorpha</taxon>
        <taxon>Rhabditoidea</taxon>
        <taxon>Rhabditidae</taxon>
        <taxon>Peloderinae</taxon>
        <taxon>Caenorhabditis</taxon>
    </lineage>
</organism>
<proteinExistence type="evidence at protein level"/>
<dbReference type="EC" id="1.3.3.-" evidence="10 11"/>
<dbReference type="EMBL" id="BX284601">
    <property type="protein sequence ID" value="CAB16866.1"/>
    <property type="molecule type" value="Genomic_DNA"/>
</dbReference>
<dbReference type="PIR" id="T20570">
    <property type="entry name" value="T20570"/>
</dbReference>
<dbReference type="RefSeq" id="NP_493264.1">
    <property type="nucleotide sequence ID" value="NM_060863.6"/>
</dbReference>
<dbReference type="SMR" id="O62139"/>
<dbReference type="FunCoup" id="O62139">
    <property type="interactions" value="1662"/>
</dbReference>
<dbReference type="STRING" id="6239.F08A8.4.2"/>
<dbReference type="PaxDb" id="6239-F08A8.4.2"/>
<dbReference type="PeptideAtlas" id="O62139"/>
<dbReference type="EnsemblMetazoa" id="F08A8.4.1">
    <property type="protein sequence ID" value="F08A8.4.1"/>
    <property type="gene ID" value="WBGene00008567"/>
</dbReference>
<dbReference type="GeneID" id="173164"/>
<dbReference type="KEGG" id="cel:CELE_F08A8.4"/>
<dbReference type="UCSC" id="F08A8.4.1">
    <property type="organism name" value="c. elegans"/>
</dbReference>
<dbReference type="AGR" id="WB:WBGene00008567"/>
<dbReference type="CTD" id="173164"/>
<dbReference type="WormBase" id="F08A8.4">
    <property type="protein sequence ID" value="CE17636"/>
    <property type="gene ID" value="WBGene00008567"/>
    <property type="gene designation" value="acox-1.4"/>
</dbReference>
<dbReference type="eggNOG" id="KOG0136">
    <property type="taxonomic scope" value="Eukaryota"/>
</dbReference>
<dbReference type="GeneTree" id="ENSGT00940000168827"/>
<dbReference type="HOGENOM" id="CLU_014629_3_1_1"/>
<dbReference type="InParanoid" id="O62139"/>
<dbReference type="OMA" id="NHGVHCF"/>
<dbReference type="OrthoDB" id="538336at2759"/>
<dbReference type="PhylomeDB" id="O62139"/>
<dbReference type="Reactome" id="R-CEL-193368">
    <property type="pathway name" value="Synthesis of bile acids and bile salts via 7alpha-hydroxycholesterol"/>
</dbReference>
<dbReference type="Reactome" id="R-CEL-389887">
    <property type="pathway name" value="Beta-oxidation of pristanoyl-CoA"/>
</dbReference>
<dbReference type="Reactome" id="R-CEL-9033241">
    <property type="pathway name" value="Peroxisomal protein import"/>
</dbReference>
<dbReference type="UniPathway" id="UPA00661"/>
<dbReference type="PRO" id="PR:O62139"/>
<dbReference type="Proteomes" id="UP000001940">
    <property type="component" value="Chromosome I"/>
</dbReference>
<dbReference type="Bgee" id="WBGene00008567">
    <property type="expression patterns" value="Expressed in larva and 1 other cell type or tissue"/>
</dbReference>
<dbReference type="GO" id="GO:0005777">
    <property type="term" value="C:peroxisome"/>
    <property type="evidence" value="ECO:0000318"/>
    <property type="project" value="GO_Central"/>
</dbReference>
<dbReference type="GO" id="GO:0003997">
    <property type="term" value="F:acyl-CoA oxidase activity"/>
    <property type="evidence" value="ECO:0000318"/>
    <property type="project" value="GO_Central"/>
</dbReference>
<dbReference type="GO" id="GO:0005524">
    <property type="term" value="F:ATP binding"/>
    <property type="evidence" value="ECO:0007669"/>
    <property type="project" value="UniProtKB-KW"/>
</dbReference>
<dbReference type="GO" id="GO:0071949">
    <property type="term" value="F:FAD binding"/>
    <property type="evidence" value="ECO:0007669"/>
    <property type="project" value="InterPro"/>
</dbReference>
<dbReference type="GO" id="GO:0005504">
    <property type="term" value="F:fatty acid binding"/>
    <property type="evidence" value="ECO:0000318"/>
    <property type="project" value="GO_Central"/>
</dbReference>
<dbReference type="GO" id="GO:0050660">
    <property type="term" value="F:flavin adenine dinucleotide binding"/>
    <property type="evidence" value="ECO:0000318"/>
    <property type="project" value="GO_Central"/>
</dbReference>
<dbReference type="GO" id="GO:1904070">
    <property type="term" value="P:ascaroside biosynthetic process"/>
    <property type="evidence" value="ECO:0000315"/>
    <property type="project" value="UniProtKB"/>
</dbReference>
<dbReference type="GO" id="GO:0033540">
    <property type="term" value="P:fatty acid beta-oxidation using acyl-CoA oxidase"/>
    <property type="evidence" value="ECO:0000318"/>
    <property type="project" value="GO_Central"/>
</dbReference>
<dbReference type="GO" id="GO:0042811">
    <property type="term" value="P:pheromone biosynthetic process"/>
    <property type="evidence" value="ECO:0000315"/>
    <property type="project" value="UniProtKB"/>
</dbReference>
<dbReference type="FunFam" id="1.10.540.10:FF:000006">
    <property type="entry name" value="Acyl-coenzyme A oxidase"/>
    <property type="match status" value="1"/>
</dbReference>
<dbReference type="FunFam" id="1.20.140.10:FF:000005">
    <property type="entry name" value="Acyl-coenzyme A oxidase"/>
    <property type="match status" value="1"/>
</dbReference>
<dbReference type="FunFam" id="1.20.140.10:FF:000013">
    <property type="entry name" value="Acyl-coenzyme A oxidase"/>
    <property type="match status" value="1"/>
</dbReference>
<dbReference type="FunFam" id="2.40.110.10:FF:000003">
    <property type="entry name" value="Acyl-coenzyme A oxidase"/>
    <property type="match status" value="1"/>
</dbReference>
<dbReference type="Gene3D" id="1.10.540.10">
    <property type="entry name" value="Acyl-CoA dehydrogenase/oxidase, N-terminal domain"/>
    <property type="match status" value="1"/>
</dbReference>
<dbReference type="Gene3D" id="2.40.110.10">
    <property type="entry name" value="Butyryl-CoA Dehydrogenase, subunit A, domain 2"/>
    <property type="match status" value="1"/>
</dbReference>
<dbReference type="Gene3D" id="1.20.140.10">
    <property type="entry name" value="Butyryl-CoA Dehydrogenase, subunit A, domain 3"/>
    <property type="match status" value="2"/>
</dbReference>
<dbReference type="InterPro" id="IPR055060">
    <property type="entry name" value="ACOX_C_alpha1"/>
</dbReference>
<dbReference type="InterPro" id="IPR029320">
    <property type="entry name" value="Acyl-CoA_ox_N"/>
</dbReference>
<dbReference type="InterPro" id="IPR046373">
    <property type="entry name" value="Acyl-CoA_Oxase/DH_mid-dom_sf"/>
</dbReference>
<dbReference type="InterPro" id="IPR012258">
    <property type="entry name" value="Acyl-CoA_oxidase"/>
</dbReference>
<dbReference type="InterPro" id="IPR002655">
    <property type="entry name" value="Acyl-CoA_oxidase_C"/>
</dbReference>
<dbReference type="InterPro" id="IPR036250">
    <property type="entry name" value="AcylCo_DH-like_C"/>
</dbReference>
<dbReference type="InterPro" id="IPR037069">
    <property type="entry name" value="AcylCoA_DH/ox_N_sf"/>
</dbReference>
<dbReference type="InterPro" id="IPR009100">
    <property type="entry name" value="AcylCoA_DH/oxidase_NM_dom_sf"/>
</dbReference>
<dbReference type="PANTHER" id="PTHR10909">
    <property type="entry name" value="ELECTRON TRANSPORT OXIDOREDUCTASE"/>
    <property type="match status" value="1"/>
</dbReference>
<dbReference type="PANTHER" id="PTHR10909:SF250">
    <property type="entry name" value="PEROXISOMAL ACYL-COENZYME A OXIDASE 1"/>
    <property type="match status" value="1"/>
</dbReference>
<dbReference type="Pfam" id="PF01756">
    <property type="entry name" value="ACOX"/>
    <property type="match status" value="1"/>
</dbReference>
<dbReference type="Pfam" id="PF22924">
    <property type="entry name" value="ACOX_C_alpha1"/>
    <property type="match status" value="1"/>
</dbReference>
<dbReference type="Pfam" id="PF14749">
    <property type="entry name" value="Acyl-CoA_ox_N"/>
    <property type="match status" value="1"/>
</dbReference>
<dbReference type="PIRSF" id="PIRSF000168">
    <property type="entry name" value="Acyl-CoA_oxidase"/>
    <property type="match status" value="1"/>
</dbReference>
<dbReference type="SUPFAM" id="SSF47203">
    <property type="entry name" value="Acyl-CoA dehydrogenase C-terminal domain-like"/>
    <property type="match status" value="2"/>
</dbReference>
<dbReference type="SUPFAM" id="SSF56645">
    <property type="entry name" value="Acyl-CoA dehydrogenase NM domain-like"/>
    <property type="match status" value="1"/>
</dbReference>
<feature type="chain" id="PRO_0000452305" description="Acyl-coenzyme A oxidase acox-1.4">
    <location>
        <begin position="1"/>
        <end position="662"/>
    </location>
</feature>
<feature type="short sequence motif" description="Microbody targeting signal" evidence="3">
    <location>
        <begin position="660"/>
        <end position="662"/>
    </location>
</feature>
<feature type="active site" description="Proton acceptor" evidence="5">
    <location>
        <position position="433"/>
    </location>
</feature>
<feature type="binding site" description="in other chain" evidence="2">
    <location>
        <begin position="148"/>
        <end position="151"/>
    </location>
    <ligand>
        <name>FAD</name>
        <dbReference type="ChEBI" id="CHEBI:57692"/>
        <note>ligand shared between dimeric partners</note>
    </ligand>
</feature>
<feature type="binding site" description="in other chain" evidence="2">
    <location>
        <begin position="156"/>
        <end position="157"/>
    </location>
    <ligand>
        <name>FAD</name>
        <dbReference type="ChEBI" id="CHEBI:57692"/>
        <note>ligand shared between dimeric partners</note>
    </ligand>
</feature>
<feature type="binding site" description="in other chain" evidence="2 6">
    <location>
        <position position="190"/>
    </location>
    <ligand>
        <name>FAD</name>
        <dbReference type="ChEBI" id="CHEBI:57692"/>
        <note>ligand shared between dimeric partners</note>
    </ligand>
</feature>
<feature type="binding site" evidence="1">
    <location>
        <begin position="284"/>
        <end position="287"/>
    </location>
    <ligand>
        <name>substrate</name>
    </ligand>
</feature>
<feature type="binding site" evidence="1">
    <location>
        <position position="294"/>
    </location>
    <ligand>
        <name>substrate</name>
    </ligand>
</feature>
<feature type="binding site" evidence="2">
    <location>
        <position position="319"/>
    </location>
    <ligand>
        <name>FAD</name>
        <dbReference type="ChEBI" id="CHEBI:57692"/>
        <note>ligand shared between dimeric partners</note>
    </ligand>
</feature>
<feature type="binding site" evidence="2">
    <location>
        <begin position="339"/>
        <end position="342"/>
    </location>
    <ligand>
        <name>FAD</name>
        <dbReference type="ChEBI" id="CHEBI:57692"/>
        <note>ligand shared between dimeric partners</note>
    </ligand>
</feature>
<feature type="binding site" evidence="1">
    <location>
        <position position="341"/>
    </location>
    <ligand>
        <name>ATP</name>
        <dbReference type="ChEBI" id="CHEBI:30616"/>
        <note>ligand shared between dimeric partners</note>
    </ligand>
</feature>
<feature type="binding site" description="in other chain" evidence="2">
    <location>
        <position position="391"/>
    </location>
    <ligand>
        <name>ATP</name>
        <dbReference type="ChEBI" id="CHEBI:30616"/>
        <note>ligand shared between dimeric partners</note>
    </ligand>
</feature>
<feature type="binding site" description="in other chain" evidence="2">
    <location>
        <position position="395"/>
    </location>
    <ligand>
        <name>ATP</name>
        <dbReference type="ChEBI" id="CHEBI:30616"/>
        <note>ligand shared between dimeric partners</note>
    </ligand>
</feature>
<feature type="binding site" evidence="2">
    <location>
        <position position="403"/>
    </location>
    <ligand>
        <name>ATP</name>
        <dbReference type="ChEBI" id="CHEBI:30616"/>
        <note>ligand shared between dimeric partners</note>
    </ligand>
</feature>
<feature type="binding site" evidence="1">
    <location>
        <position position="410"/>
    </location>
    <ligand>
        <name>FAD</name>
        <dbReference type="ChEBI" id="CHEBI:57692"/>
        <note>ligand shared between dimeric partners</note>
    </ligand>
</feature>
<feature type="binding site" evidence="1">
    <location>
        <begin position="432"/>
        <end position="433"/>
    </location>
    <ligand>
        <name>substrate</name>
    </ligand>
</feature>
<feature type="binding site" description="in other chain" evidence="1">
    <location>
        <position position="435"/>
    </location>
    <ligand>
        <name>FAD</name>
        <dbReference type="ChEBI" id="CHEBI:57692"/>
        <note>ligand shared between dimeric partners</note>
    </ligand>
</feature>
<feature type="binding site" description="in other chain" evidence="2">
    <location>
        <begin position="526"/>
        <end position="529"/>
    </location>
    <ligand>
        <name>ATP</name>
        <dbReference type="ChEBI" id="CHEBI:30616"/>
        <note>ligand shared between dimeric partners</note>
    </ligand>
</feature>
<feature type="binding site" description="in other chain" evidence="2">
    <location>
        <position position="574"/>
    </location>
    <ligand>
        <name>ATP</name>
        <dbReference type="ChEBI" id="CHEBI:30616"/>
        <note>ligand shared between dimeric partners</note>
    </ligand>
</feature>
<feature type="mutagenesis site" description="In reb6; accumulation of ascaroside asc-C9 and reduced production of asc-delta-C7 and asc-delta-C9. No defect in indol-3-carbonyl(IC)-ascaroside production. Enhances accumulation of IC-asc-C7 and IC-asc-C9 in a acox-1.1 (reb2) and acox-3 (tm4033) mutant background." evidence="7 8">
    <original>E</original>
    <variation>A</variation>
    <location>
        <position position="433"/>
    </location>
</feature>
<feature type="mutagenesis site" description="In gk892586; accumulation of ascarosides asc-C7 and asc-C9." evidence="7">
    <location>
        <begin position="517"/>
        <end position="662"/>
    </location>
</feature>